<sequence length="513" mass="53768">MTTITLTPGSVPLSSWRALWQGATPKLDPACRPTIAGSASAVARILSRGKPVYGINTGFGKLAAVRIPDDQLEMLQRNIVLSHAAGVGEPSPANIVRLMMALKMTNLGRGASGVRLETIDLMEAMLAADLLPLIPAQGSVGASGDLAPLAHMACAMIGVGDVFLKGERLSAASAFRKAGLTPLPALAAKEGLALLNGTQFSTACALAGLFEAERILQSALVTGALSTEAAKGSDAPFDPRIHELRGHRGQIDCADILRDLMAGSAIRASHLENDTRVQDPYCIRCQPQVAGAALTLLRQAADTLLTESNGVSDNPLIFPETDEALSGGNFHAEPVAFAADMIAMALCEIGSISERRIAMLVDPALSGMPAFLTPQPGLNSGFMIPQVTAAALVSENKQMAFPASVDSIPTSANQEDHVSMAAHGARRLLTMAKNVDYILGIELLAAAQACDFHAPLRSSDALEALRARIRQDVPPLDHDRLMHPDIEAATGLIRSGEAIRAVNRPLPALEAAP</sequence>
<proteinExistence type="inferred from homology"/>
<gene>
    <name evidence="1" type="primary">hutH</name>
    <name type="ordered locus">HNE_2396</name>
</gene>
<keyword id="KW-0963">Cytoplasm</keyword>
<keyword id="KW-0369">Histidine metabolism</keyword>
<keyword id="KW-0456">Lyase</keyword>
<keyword id="KW-1185">Reference proteome</keyword>
<organism>
    <name type="scientific">Hyphomonas neptunium (strain ATCC 15444)</name>
    <dbReference type="NCBI Taxonomy" id="228405"/>
    <lineage>
        <taxon>Bacteria</taxon>
        <taxon>Pseudomonadati</taxon>
        <taxon>Pseudomonadota</taxon>
        <taxon>Alphaproteobacteria</taxon>
        <taxon>Hyphomonadales</taxon>
        <taxon>Hyphomonadaceae</taxon>
        <taxon>Hyphomonas</taxon>
    </lineage>
</organism>
<protein>
    <recommendedName>
        <fullName evidence="1">Histidine ammonia-lyase</fullName>
        <shortName evidence="1">Histidase</shortName>
        <ecNumber evidence="1">4.3.1.3</ecNumber>
    </recommendedName>
</protein>
<name>HUTH_HYPNA</name>
<dbReference type="EC" id="4.3.1.3" evidence="1"/>
<dbReference type="EMBL" id="CP000158">
    <property type="protein sequence ID" value="ABI76153.1"/>
    <property type="molecule type" value="Genomic_DNA"/>
</dbReference>
<dbReference type="RefSeq" id="WP_011647389.1">
    <property type="nucleotide sequence ID" value="NC_008358.1"/>
</dbReference>
<dbReference type="SMR" id="Q0BZK2"/>
<dbReference type="STRING" id="228405.HNE_2396"/>
<dbReference type="KEGG" id="hne:HNE_2396"/>
<dbReference type="eggNOG" id="COG2986">
    <property type="taxonomic scope" value="Bacteria"/>
</dbReference>
<dbReference type="HOGENOM" id="CLU_014801_4_0_5"/>
<dbReference type="UniPathway" id="UPA00379">
    <property type="reaction ID" value="UER00549"/>
</dbReference>
<dbReference type="Proteomes" id="UP000001959">
    <property type="component" value="Chromosome"/>
</dbReference>
<dbReference type="GO" id="GO:0005737">
    <property type="term" value="C:cytoplasm"/>
    <property type="evidence" value="ECO:0007669"/>
    <property type="project" value="UniProtKB-SubCell"/>
</dbReference>
<dbReference type="GO" id="GO:0004397">
    <property type="term" value="F:histidine ammonia-lyase activity"/>
    <property type="evidence" value="ECO:0007669"/>
    <property type="project" value="UniProtKB-UniRule"/>
</dbReference>
<dbReference type="GO" id="GO:0019556">
    <property type="term" value="P:L-histidine catabolic process to glutamate and formamide"/>
    <property type="evidence" value="ECO:0007669"/>
    <property type="project" value="UniProtKB-UniPathway"/>
</dbReference>
<dbReference type="GO" id="GO:0019557">
    <property type="term" value="P:L-histidine catabolic process to glutamate and formate"/>
    <property type="evidence" value="ECO:0007669"/>
    <property type="project" value="UniProtKB-UniPathway"/>
</dbReference>
<dbReference type="CDD" id="cd00332">
    <property type="entry name" value="PAL-HAL"/>
    <property type="match status" value="1"/>
</dbReference>
<dbReference type="FunFam" id="1.10.275.10:FF:000005">
    <property type="entry name" value="Histidine ammonia-lyase"/>
    <property type="match status" value="1"/>
</dbReference>
<dbReference type="FunFam" id="1.20.200.10:FF:000003">
    <property type="entry name" value="Histidine ammonia-lyase"/>
    <property type="match status" value="1"/>
</dbReference>
<dbReference type="Gene3D" id="1.20.200.10">
    <property type="entry name" value="Fumarase/aspartase (Central domain)"/>
    <property type="match status" value="1"/>
</dbReference>
<dbReference type="Gene3D" id="1.10.275.10">
    <property type="entry name" value="Fumarase/aspartase (N-terminal domain)"/>
    <property type="match status" value="1"/>
</dbReference>
<dbReference type="HAMAP" id="MF_00229">
    <property type="entry name" value="His_ammonia_lyase"/>
    <property type="match status" value="1"/>
</dbReference>
<dbReference type="InterPro" id="IPR001106">
    <property type="entry name" value="Aromatic_Lyase"/>
</dbReference>
<dbReference type="InterPro" id="IPR024083">
    <property type="entry name" value="Fumarase/histidase_N"/>
</dbReference>
<dbReference type="InterPro" id="IPR005921">
    <property type="entry name" value="HutH"/>
</dbReference>
<dbReference type="InterPro" id="IPR008948">
    <property type="entry name" value="L-Aspartase-like"/>
</dbReference>
<dbReference type="InterPro" id="IPR022313">
    <property type="entry name" value="Phe/His_NH3-lyase_AS"/>
</dbReference>
<dbReference type="NCBIfam" id="TIGR01225">
    <property type="entry name" value="hutH"/>
    <property type="match status" value="1"/>
</dbReference>
<dbReference type="NCBIfam" id="NF006871">
    <property type="entry name" value="PRK09367.1"/>
    <property type="match status" value="1"/>
</dbReference>
<dbReference type="PANTHER" id="PTHR10362">
    <property type="entry name" value="HISTIDINE AMMONIA-LYASE"/>
    <property type="match status" value="1"/>
</dbReference>
<dbReference type="Pfam" id="PF00221">
    <property type="entry name" value="Lyase_aromatic"/>
    <property type="match status" value="1"/>
</dbReference>
<dbReference type="SUPFAM" id="SSF48557">
    <property type="entry name" value="L-aspartase-like"/>
    <property type="match status" value="1"/>
</dbReference>
<dbReference type="PROSITE" id="PS00488">
    <property type="entry name" value="PAL_HISTIDASE"/>
    <property type="match status" value="1"/>
</dbReference>
<feature type="chain" id="PRO_0000336584" description="Histidine ammonia-lyase">
    <location>
        <begin position="1"/>
        <end position="513"/>
    </location>
</feature>
<feature type="modified residue" description="2,3-didehydroalanine (Ser)" evidence="1">
    <location>
        <position position="143"/>
    </location>
</feature>
<feature type="cross-link" description="5-imidazolinone (Ala-Gly)" evidence="1">
    <location>
        <begin position="142"/>
        <end position="144"/>
    </location>
</feature>
<reference key="1">
    <citation type="journal article" date="2006" name="J. Bacteriol.">
        <title>Comparative genomic evidence for a close relationship between the dimorphic prosthecate bacteria Hyphomonas neptunium and Caulobacter crescentus.</title>
        <authorList>
            <person name="Badger J.H."/>
            <person name="Hoover T.R."/>
            <person name="Brun Y.V."/>
            <person name="Weiner R.M."/>
            <person name="Laub M.T."/>
            <person name="Alexandre G."/>
            <person name="Mrazek J."/>
            <person name="Ren Q."/>
            <person name="Paulsen I.T."/>
            <person name="Nelson K.E."/>
            <person name="Khouri H.M."/>
            <person name="Radune D."/>
            <person name="Sosa J."/>
            <person name="Dodson R.J."/>
            <person name="Sullivan S.A."/>
            <person name="Rosovitz M.J."/>
            <person name="Madupu R."/>
            <person name="Brinkac L.M."/>
            <person name="Durkin A.S."/>
            <person name="Daugherty S.C."/>
            <person name="Kothari S.P."/>
            <person name="Giglio M.G."/>
            <person name="Zhou L."/>
            <person name="Haft D.H."/>
            <person name="Selengut J.D."/>
            <person name="Davidsen T.M."/>
            <person name="Yang Q."/>
            <person name="Zafar N."/>
            <person name="Ward N.L."/>
        </authorList>
    </citation>
    <scope>NUCLEOTIDE SEQUENCE [LARGE SCALE GENOMIC DNA]</scope>
    <source>
        <strain>ATCC 15444</strain>
    </source>
</reference>
<accession>Q0BZK2</accession>
<evidence type="ECO:0000255" key="1">
    <source>
        <dbReference type="HAMAP-Rule" id="MF_00229"/>
    </source>
</evidence>
<comment type="catalytic activity">
    <reaction evidence="1">
        <text>L-histidine = trans-urocanate + NH4(+)</text>
        <dbReference type="Rhea" id="RHEA:21232"/>
        <dbReference type="ChEBI" id="CHEBI:17771"/>
        <dbReference type="ChEBI" id="CHEBI:28938"/>
        <dbReference type="ChEBI" id="CHEBI:57595"/>
        <dbReference type="EC" id="4.3.1.3"/>
    </reaction>
</comment>
<comment type="pathway">
    <text evidence="1">Amino-acid degradation; L-histidine degradation into L-glutamate; N-formimidoyl-L-glutamate from L-histidine: step 1/3.</text>
</comment>
<comment type="subcellular location">
    <subcellularLocation>
        <location evidence="1">Cytoplasm</location>
    </subcellularLocation>
</comment>
<comment type="PTM">
    <text evidence="1">Contains an active site 4-methylidene-imidazol-5-one (MIO), which is formed autocatalytically by cyclization and dehydration of residues Ala-Ser-Gly.</text>
</comment>
<comment type="similarity">
    <text evidence="1">Belongs to the PAL/histidase family.</text>
</comment>